<dbReference type="EMBL" id="M27491">
    <property type="protein sequence ID" value="AAA46054.1"/>
    <property type="molecule type" value="Genomic_DNA"/>
</dbReference>
<dbReference type="PIR" id="A32593">
    <property type="entry name" value="VGBEHB"/>
</dbReference>
<dbReference type="GlyCosmos" id="P14378">
    <property type="glycosylation" value="3 sites, No reported glycans"/>
</dbReference>
<dbReference type="GO" id="GO:0016020">
    <property type="term" value="C:membrane"/>
    <property type="evidence" value="ECO:0007669"/>
    <property type="project" value="UniProtKB-KW"/>
</dbReference>
<dbReference type="GO" id="GO:0055036">
    <property type="term" value="C:virion membrane"/>
    <property type="evidence" value="ECO:0007669"/>
    <property type="project" value="UniProtKB-SubCell"/>
</dbReference>
<dbReference type="GO" id="GO:0098671">
    <property type="term" value="P:adhesion receptor-mediated virion attachment to host cell"/>
    <property type="evidence" value="ECO:0007669"/>
    <property type="project" value="UniProtKB-KW"/>
</dbReference>
<dbReference type="GO" id="GO:0046718">
    <property type="term" value="P:symbiont entry into host cell"/>
    <property type="evidence" value="ECO:0007669"/>
    <property type="project" value="UniProtKB-KW"/>
</dbReference>
<dbReference type="GO" id="GO:0042784">
    <property type="term" value="P:symbiont-mediated suppression of host complement activation"/>
    <property type="evidence" value="ECO:0007669"/>
    <property type="project" value="UniProtKB-KW"/>
</dbReference>
<dbReference type="Gene3D" id="2.60.40.10">
    <property type="entry name" value="Immunoglobulins"/>
    <property type="match status" value="1"/>
</dbReference>
<dbReference type="InterPro" id="IPR001038">
    <property type="entry name" value="GA_GC"/>
</dbReference>
<dbReference type="InterPro" id="IPR007110">
    <property type="entry name" value="Ig-like_dom"/>
</dbReference>
<dbReference type="InterPro" id="IPR036179">
    <property type="entry name" value="Ig-like_dom_sf"/>
</dbReference>
<dbReference type="InterPro" id="IPR013783">
    <property type="entry name" value="Ig-like_fold"/>
</dbReference>
<dbReference type="Pfam" id="PF02124">
    <property type="entry name" value="Marek_A"/>
    <property type="match status" value="1"/>
</dbReference>
<dbReference type="PRINTS" id="PR00668">
    <property type="entry name" value="GLYCPROTEINC"/>
</dbReference>
<dbReference type="SUPFAM" id="SSF48726">
    <property type="entry name" value="Immunoglobulin"/>
    <property type="match status" value="1"/>
</dbReference>
<dbReference type="PROSITE" id="PS50835">
    <property type="entry name" value="IG_LIKE"/>
    <property type="match status" value="1"/>
</dbReference>
<sequence>MGPLGRAWLIAAIFAWALLSARRGLAEEAEASPSPPPSPCPTETESSAGTTGATPPTPNSPDATPEDSTPGATTPVGTPEPPSVSEHDPPVTNSTPPPAPPEDGRPGGAGNASRDGRPSGGGRPRPPRPSKAPPKERKWMLCEREAVAASYAEPLYVHCGVADNATGGARLELWFQRVGRFRSTRGDDEAVRNPFPRAPPVLLFVAQNGSIAYRSAELGDNYIFPSPADPRNLPLTVRSLTAATEGVYTWRRDMGTKSQRKVVTVTTHRAPAVSVEPQPALEGAGYAAVCRAAEYYPPRSTRLHWFRNGYPVEARHARDVFTVDDSGLFSRTSVLTLEDATPTAHPPNLRCDVSWFQSANMERRFYAAGTPAVYRPPELRVYFEGGEAVCEARCVPEGRVSLRWTVRDGIAPSRTEQTGVCAERPGLVNLRGVRLLSTTDGPVDYTCTATGYPAPLPEFSATATYDASPGLIGSPVLVSVVAVACGLGAVGLLLVAASCLRRKARVIQPGLTRARALGSAP</sequence>
<gene>
    <name type="primary">gC</name>
    <name type="ORF">GIII</name>
</gene>
<reference key="1">
    <citation type="journal article" date="1989" name="Virology">
        <title>Nucleotide sequence of bovine herpesvirus type 1 glycoprotein gIII, a structural model for gIII as a new member of the immunoglobulin superfamily, and implications for the homologous glycoproteins of other herpesviruses.</title>
        <authorList>
            <person name="Fitzpatrick D.R."/>
            <person name="Babiuk L.A."/>
            <person name="Zamb T.J."/>
        </authorList>
    </citation>
    <scope>NUCLEOTIDE SEQUENCE [GENOMIC DNA]</scope>
</reference>
<reference key="2">
    <citation type="journal article" date="1993" name="Arch. Virol.">
        <title>Species selective interaction of Alphaherpesvirinae with the 'unspecific' immune system of the host.</title>
        <authorList>
            <person name="Huemer H.P."/>
            <person name="Larcher C."/>
            <person name="van Drunen Littel-van den Hurk S."/>
            <person name="Babiuk L.A."/>
        </authorList>
    </citation>
    <scope>INTERACTION WITH HOST C3</scope>
</reference>
<organism>
    <name type="scientific">Bovine herpesvirus 1.1 (strain Cooper)</name>
    <name type="common">BoHV-1</name>
    <name type="synonym">Infectious bovine rhinotracheitis virus</name>
    <dbReference type="NCBI Taxonomy" id="10323"/>
    <lineage>
        <taxon>Viruses</taxon>
        <taxon>Duplodnaviria</taxon>
        <taxon>Heunggongvirae</taxon>
        <taxon>Peploviricota</taxon>
        <taxon>Herviviricetes</taxon>
        <taxon>Herpesvirales</taxon>
        <taxon>Orthoherpesviridae</taxon>
        <taxon>Alphaherpesvirinae</taxon>
        <taxon>Varicellovirus</taxon>
        <taxon>Varicellovirus bovinealpha1</taxon>
    </lineage>
</organism>
<organismHost>
    <name type="scientific">Bos taurus</name>
    <name type="common">Bovine</name>
    <dbReference type="NCBI Taxonomy" id="9913"/>
</organismHost>
<keyword id="KW-1015">Disulfide bond</keyword>
<keyword id="KW-0325">Glycoprotein</keyword>
<keyword id="KW-0945">Host-virus interaction</keyword>
<keyword id="KW-0393">Immunoglobulin domain</keyword>
<keyword id="KW-1087">Inhibition of host complement factors by virus</keyword>
<keyword id="KW-0472">Membrane</keyword>
<keyword id="KW-0732">Signal</keyword>
<keyword id="KW-0812">Transmembrane</keyword>
<keyword id="KW-1133">Transmembrane helix</keyword>
<keyword id="KW-1233">Viral attachment to host adhesion receptor</keyword>
<keyword id="KW-1161">Viral attachment to host cell</keyword>
<keyword id="KW-0899">Viral immunoevasion</keyword>
<keyword id="KW-0946">Virion</keyword>
<keyword id="KW-1160">Virus entry into host cell</keyword>
<feature type="signal peptide">
    <location>
        <begin position="1"/>
        <end position="21"/>
    </location>
</feature>
<feature type="chain" id="PRO_0000038205" description="Envelope glycoprotein C homolog">
    <location>
        <begin position="22"/>
        <end position="521"/>
    </location>
</feature>
<feature type="topological domain" description="Virion surface" evidence="2">
    <location>
        <begin position="22"/>
        <end position="475"/>
    </location>
</feature>
<feature type="transmembrane region" description="Helical" evidence="2">
    <location>
        <begin position="476"/>
        <end position="496"/>
    </location>
</feature>
<feature type="topological domain" description="Cytoplasmic" evidence="2">
    <location>
        <begin position="497"/>
        <end position="521"/>
    </location>
</feature>
<feature type="domain" description="Ig-like V-type">
    <location>
        <begin position="155"/>
        <end position="227"/>
    </location>
</feature>
<feature type="domain" description="Ig-like C2-type">
    <location>
        <begin position="386"/>
        <end position="451"/>
    </location>
</feature>
<feature type="region of interest" description="Disordered" evidence="4">
    <location>
        <begin position="24"/>
        <end position="138"/>
    </location>
</feature>
<feature type="compositionally biased region" description="Low complexity" evidence="4">
    <location>
        <begin position="41"/>
        <end position="54"/>
    </location>
</feature>
<feature type="compositionally biased region" description="Polar residues" evidence="4">
    <location>
        <begin position="66"/>
        <end position="76"/>
    </location>
</feature>
<feature type="glycosylation site" description="N-linked (GlcNAc...) asparagine; by host" evidence="2">
    <location>
        <position position="111"/>
    </location>
</feature>
<feature type="glycosylation site" description="N-linked (GlcNAc...) asparagine; by host" evidence="2">
    <location>
        <position position="164"/>
    </location>
</feature>
<feature type="glycosylation site" description="N-linked (GlcNAc...) asparagine; by host" evidence="2">
    <location>
        <position position="208"/>
    </location>
</feature>
<feature type="disulfide bond" evidence="3">
    <location>
        <begin position="142"/>
        <end position="159"/>
    </location>
</feature>
<feature type="disulfide bond" evidence="3">
    <location>
        <begin position="290"/>
        <end position="351"/>
    </location>
</feature>
<feature type="disulfide bond" evidence="3">
    <location>
        <begin position="390"/>
        <end position="447"/>
    </location>
</feature>
<feature type="disulfide bond" evidence="3">
    <location>
        <begin position="394"/>
        <end position="421"/>
    </location>
</feature>
<name>GC_BHV1C</name>
<protein>
    <recommendedName>
        <fullName>Envelope glycoprotein C homolog</fullName>
    </recommendedName>
    <alternativeName>
        <fullName>Glycoprotein GIII</fullName>
    </alternativeName>
</protein>
<evidence type="ECO:0000250" key="1"/>
<evidence type="ECO:0000255" key="2"/>
<evidence type="ECO:0000255" key="3">
    <source>
        <dbReference type="PROSITE-ProRule" id="PRU00114"/>
    </source>
</evidence>
<evidence type="ECO:0000256" key="4">
    <source>
        <dbReference type="SAM" id="MobiDB-lite"/>
    </source>
</evidence>
<evidence type="ECO:0000269" key="5">
    <source>
    </source>
</evidence>
<evidence type="ECO:0000305" key="6"/>
<proteinExistence type="evidence at protein level"/>
<comment type="function">
    <text evidence="1">Essential for the initial attachment to heparan sulfate moieties of the host cell surface proteoglycans (By similarity). Plays also a role in host immune evasion by inhibiting the host complement cascade activation.</text>
</comment>
<comment type="subunit">
    <text evidence="5">Interacts with host complement component C3; this interaction inhibits host immune response by disregulating complement cascade.</text>
</comment>
<comment type="subcellular location">
    <subcellularLocation>
        <location evidence="6">Virion membrane</location>
        <topology evidence="6">Single-pass membrane protein</topology>
    </subcellularLocation>
</comment>
<comment type="similarity">
    <text evidence="6">Belongs to the herpesviridae glycoprotein C family.</text>
</comment>
<accession>P14378</accession>